<proteinExistence type="inferred from homology"/>
<feature type="chain" id="PRO_0000163411" description="Large ribosomal subunit protein bL19">
    <location>
        <begin position="1"/>
        <end position="115"/>
    </location>
</feature>
<dbReference type="EMBL" id="AP006627">
    <property type="protein sequence ID" value="BAD64822.1"/>
    <property type="molecule type" value="Genomic_DNA"/>
</dbReference>
<dbReference type="RefSeq" id="WP_011247130.1">
    <property type="nucleotide sequence ID" value="NC_006582.1"/>
</dbReference>
<dbReference type="SMR" id="Q5WFN8"/>
<dbReference type="STRING" id="66692.ABC2287"/>
<dbReference type="KEGG" id="bcl:ABC2287"/>
<dbReference type="eggNOG" id="COG0335">
    <property type="taxonomic scope" value="Bacteria"/>
</dbReference>
<dbReference type="HOGENOM" id="CLU_103507_2_1_9"/>
<dbReference type="OrthoDB" id="9803541at2"/>
<dbReference type="Proteomes" id="UP000001168">
    <property type="component" value="Chromosome"/>
</dbReference>
<dbReference type="GO" id="GO:0022625">
    <property type="term" value="C:cytosolic large ribosomal subunit"/>
    <property type="evidence" value="ECO:0007669"/>
    <property type="project" value="TreeGrafter"/>
</dbReference>
<dbReference type="GO" id="GO:0003735">
    <property type="term" value="F:structural constituent of ribosome"/>
    <property type="evidence" value="ECO:0007669"/>
    <property type="project" value="InterPro"/>
</dbReference>
<dbReference type="GO" id="GO:0006412">
    <property type="term" value="P:translation"/>
    <property type="evidence" value="ECO:0007669"/>
    <property type="project" value="UniProtKB-UniRule"/>
</dbReference>
<dbReference type="FunFam" id="2.30.30.790:FF:000001">
    <property type="entry name" value="50S ribosomal protein L19"/>
    <property type="match status" value="1"/>
</dbReference>
<dbReference type="Gene3D" id="2.30.30.790">
    <property type="match status" value="1"/>
</dbReference>
<dbReference type="HAMAP" id="MF_00402">
    <property type="entry name" value="Ribosomal_bL19"/>
    <property type="match status" value="1"/>
</dbReference>
<dbReference type="InterPro" id="IPR001857">
    <property type="entry name" value="Ribosomal_bL19"/>
</dbReference>
<dbReference type="InterPro" id="IPR018257">
    <property type="entry name" value="Ribosomal_bL19_CS"/>
</dbReference>
<dbReference type="InterPro" id="IPR038657">
    <property type="entry name" value="Ribosomal_bL19_sf"/>
</dbReference>
<dbReference type="InterPro" id="IPR008991">
    <property type="entry name" value="Translation_prot_SH3-like_sf"/>
</dbReference>
<dbReference type="NCBIfam" id="TIGR01024">
    <property type="entry name" value="rplS_bact"/>
    <property type="match status" value="1"/>
</dbReference>
<dbReference type="PANTHER" id="PTHR15680:SF9">
    <property type="entry name" value="LARGE RIBOSOMAL SUBUNIT PROTEIN BL19M"/>
    <property type="match status" value="1"/>
</dbReference>
<dbReference type="PANTHER" id="PTHR15680">
    <property type="entry name" value="RIBOSOMAL PROTEIN L19"/>
    <property type="match status" value="1"/>
</dbReference>
<dbReference type="Pfam" id="PF01245">
    <property type="entry name" value="Ribosomal_L19"/>
    <property type="match status" value="1"/>
</dbReference>
<dbReference type="PIRSF" id="PIRSF002191">
    <property type="entry name" value="Ribosomal_L19"/>
    <property type="match status" value="1"/>
</dbReference>
<dbReference type="PRINTS" id="PR00061">
    <property type="entry name" value="RIBOSOMALL19"/>
</dbReference>
<dbReference type="SUPFAM" id="SSF50104">
    <property type="entry name" value="Translation proteins SH3-like domain"/>
    <property type="match status" value="1"/>
</dbReference>
<dbReference type="PROSITE" id="PS01015">
    <property type="entry name" value="RIBOSOMAL_L19"/>
    <property type="match status" value="1"/>
</dbReference>
<keyword id="KW-1185">Reference proteome</keyword>
<keyword id="KW-0687">Ribonucleoprotein</keyword>
<keyword id="KW-0689">Ribosomal protein</keyword>
<protein>
    <recommendedName>
        <fullName evidence="1">Large ribosomal subunit protein bL19</fullName>
    </recommendedName>
    <alternativeName>
        <fullName evidence="2">50S ribosomal protein L19</fullName>
    </alternativeName>
</protein>
<evidence type="ECO:0000255" key="1">
    <source>
        <dbReference type="HAMAP-Rule" id="MF_00402"/>
    </source>
</evidence>
<evidence type="ECO:0000305" key="2"/>
<name>RL19_SHOC1</name>
<reference key="1">
    <citation type="submission" date="2003-10" db="EMBL/GenBank/DDBJ databases">
        <title>The complete genome sequence of the alkaliphilic Bacillus clausii KSM-K16.</title>
        <authorList>
            <person name="Takaki Y."/>
            <person name="Kageyama Y."/>
            <person name="Shimamura S."/>
            <person name="Suzuki H."/>
            <person name="Nishi S."/>
            <person name="Hatada Y."/>
            <person name="Kawai S."/>
            <person name="Ito S."/>
            <person name="Horikoshi K."/>
        </authorList>
    </citation>
    <scope>NUCLEOTIDE SEQUENCE [LARGE SCALE GENOMIC DNA]</scope>
    <source>
        <strain>KSM-K16</strain>
    </source>
</reference>
<comment type="function">
    <text evidence="1">This protein is located at the 30S-50S ribosomal subunit interface and may play a role in the structure and function of the aminoacyl-tRNA binding site.</text>
</comment>
<comment type="similarity">
    <text evidence="1">Belongs to the bacterial ribosomal protein bL19 family.</text>
</comment>
<gene>
    <name evidence="1" type="primary">rplS</name>
    <name type="ordered locus">ABC2287</name>
</gene>
<accession>Q5WFN8</accession>
<organism>
    <name type="scientific">Shouchella clausii (strain KSM-K16)</name>
    <name type="common">Alkalihalobacillus clausii</name>
    <dbReference type="NCBI Taxonomy" id="66692"/>
    <lineage>
        <taxon>Bacteria</taxon>
        <taxon>Bacillati</taxon>
        <taxon>Bacillota</taxon>
        <taxon>Bacilli</taxon>
        <taxon>Bacillales</taxon>
        <taxon>Bacillaceae</taxon>
        <taxon>Shouchella</taxon>
    </lineage>
</organism>
<sequence length="115" mass="13353">MSNLITEITSEQLRTDHPDFRPGDTLSIHVKVVEGTRERIQVFEGVVIKRRGSGISETFTARKISYGVGVERTFPLHSPKIDKIEVKRYGKVRRAKLYYLRSLRGKKARIKEIRR</sequence>